<accession>Q6YXM7</accession>
<dbReference type="EC" id="3.4.21.92" evidence="1"/>
<dbReference type="EMBL" id="AP005672">
    <property type="protein sequence ID" value="BAC85025.1"/>
    <property type="molecule type" value="Genomic_DNA"/>
</dbReference>
<dbReference type="RefSeq" id="NP_904176.1">
    <property type="nucleotide sequence ID" value="NC_005087.2"/>
</dbReference>
<dbReference type="RefSeq" id="YP_009477507.1">
    <property type="nucleotide sequence ID" value="NC_037465.1"/>
</dbReference>
<dbReference type="SMR" id="Q6YXM7"/>
<dbReference type="FunCoup" id="Q6YXM7">
    <property type="interactions" value="20"/>
</dbReference>
<dbReference type="STRING" id="3218.Q6YXM7"/>
<dbReference type="MEROPS" id="S14.002"/>
<dbReference type="GeneID" id="2546750"/>
<dbReference type="GeneID" id="36487236"/>
<dbReference type="KEGG" id="ppp:2546750"/>
<dbReference type="InParanoid" id="Q6YXM7"/>
<dbReference type="OrthoDB" id="1882605at2759"/>
<dbReference type="Proteomes" id="UP000006727">
    <property type="component" value="Chloroplast"/>
</dbReference>
<dbReference type="GO" id="GO:0009570">
    <property type="term" value="C:chloroplast stroma"/>
    <property type="evidence" value="ECO:0007669"/>
    <property type="project" value="UniProtKB-SubCell"/>
</dbReference>
<dbReference type="GO" id="GO:0009368">
    <property type="term" value="C:endopeptidase Clp complex"/>
    <property type="evidence" value="ECO:0000318"/>
    <property type="project" value="GO_Central"/>
</dbReference>
<dbReference type="GO" id="GO:0004176">
    <property type="term" value="F:ATP-dependent peptidase activity"/>
    <property type="evidence" value="ECO:0000318"/>
    <property type="project" value="GO_Central"/>
</dbReference>
<dbReference type="GO" id="GO:0051117">
    <property type="term" value="F:ATPase binding"/>
    <property type="evidence" value="ECO:0000318"/>
    <property type="project" value="GO_Central"/>
</dbReference>
<dbReference type="GO" id="GO:0004252">
    <property type="term" value="F:serine-type endopeptidase activity"/>
    <property type="evidence" value="ECO:0000318"/>
    <property type="project" value="GO_Central"/>
</dbReference>
<dbReference type="GO" id="GO:0006515">
    <property type="term" value="P:protein quality control for misfolded or incompletely synthesized proteins"/>
    <property type="evidence" value="ECO:0000318"/>
    <property type="project" value="GO_Central"/>
</dbReference>
<dbReference type="CDD" id="cd07017">
    <property type="entry name" value="S14_ClpP_2"/>
    <property type="match status" value="1"/>
</dbReference>
<dbReference type="FunFam" id="3.90.226.10:FF:000006">
    <property type="entry name" value="ATP-dependent Clp protease proteolytic subunit"/>
    <property type="match status" value="1"/>
</dbReference>
<dbReference type="Gene3D" id="3.90.226.10">
    <property type="entry name" value="2-enoyl-CoA Hydratase, Chain A, domain 1"/>
    <property type="match status" value="1"/>
</dbReference>
<dbReference type="HAMAP" id="MF_00444">
    <property type="entry name" value="ClpP"/>
    <property type="match status" value="1"/>
</dbReference>
<dbReference type="InterPro" id="IPR001907">
    <property type="entry name" value="ClpP"/>
</dbReference>
<dbReference type="InterPro" id="IPR029045">
    <property type="entry name" value="ClpP/crotonase-like_dom_sf"/>
</dbReference>
<dbReference type="InterPro" id="IPR023562">
    <property type="entry name" value="ClpP/TepA"/>
</dbReference>
<dbReference type="InterPro" id="IPR033135">
    <property type="entry name" value="ClpP_His_AS"/>
</dbReference>
<dbReference type="InterPro" id="IPR018215">
    <property type="entry name" value="ClpP_Ser_AS"/>
</dbReference>
<dbReference type="PANTHER" id="PTHR10381">
    <property type="entry name" value="ATP-DEPENDENT CLP PROTEASE PROTEOLYTIC SUBUNIT"/>
    <property type="match status" value="1"/>
</dbReference>
<dbReference type="PANTHER" id="PTHR10381:SF15">
    <property type="entry name" value="CHLOROPLASTIC ATP-DEPENDENT CLP PROTEASE PROTEOLYTIC SUBUNIT 1"/>
    <property type="match status" value="1"/>
</dbReference>
<dbReference type="Pfam" id="PF00574">
    <property type="entry name" value="CLP_protease"/>
    <property type="match status" value="1"/>
</dbReference>
<dbReference type="PRINTS" id="PR00127">
    <property type="entry name" value="CLPPROTEASEP"/>
</dbReference>
<dbReference type="SUPFAM" id="SSF52096">
    <property type="entry name" value="ClpP/crotonase"/>
    <property type="match status" value="1"/>
</dbReference>
<dbReference type="PROSITE" id="PS00382">
    <property type="entry name" value="CLP_PROTEASE_HIS"/>
    <property type="match status" value="1"/>
</dbReference>
<dbReference type="PROSITE" id="PS00381">
    <property type="entry name" value="CLP_PROTEASE_SER"/>
    <property type="match status" value="1"/>
</dbReference>
<evidence type="ECO:0000255" key="1">
    <source>
        <dbReference type="HAMAP-Rule" id="MF_00444"/>
    </source>
</evidence>
<feature type="chain" id="PRO_0000179752" description="ATP-dependent Clp protease proteolytic subunit">
    <location>
        <begin position="1"/>
        <end position="199"/>
    </location>
</feature>
<feature type="active site" description="Nucleophile" evidence="1">
    <location>
        <position position="102"/>
    </location>
</feature>
<feature type="active site" evidence="1">
    <location>
        <position position="127"/>
    </location>
</feature>
<reference key="1">
    <citation type="journal article" date="2003" name="Nucleic Acids Res.">
        <title>Complete chloroplast DNA sequence of the moss Physcomitrella patens: evidence for the loss and relocation of rpoA from the chloroplast to the nucleus.</title>
        <authorList>
            <person name="Sugiura C."/>
            <person name="Kobayashi Y."/>
            <person name="Setsuyuki A."/>
            <person name="Sugita C."/>
            <person name="Sugita M."/>
        </authorList>
    </citation>
    <scope>NUCLEOTIDE SEQUENCE [LARGE SCALE GENOMIC DNA]</scope>
    <source>
        <strain>cv. Gransden 2004</strain>
    </source>
</reference>
<name>CLPP_PHYPA</name>
<geneLocation type="chloroplast"/>
<gene>
    <name evidence="1" type="primary">clpP</name>
</gene>
<comment type="function">
    <text evidence="1">Cleaves peptides in various proteins in a process that requires ATP hydrolysis. Has a chymotrypsin-like activity. Plays a major role in the degradation of misfolded proteins.</text>
</comment>
<comment type="catalytic activity">
    <reaction evidence="1">
        <text>Hydrolysis of proteins to small peptides in the presence of ATP and magnesium. alpha-casein is the usual test substrate. In the absence of ATP, only oligopeptides shorter than five residues are hydrolyzed (such as succinyl-Leu-Tyr-|-NHMec, and Leu-Tyr-Leu-|-Tyr-Trp, in which cleavage of the -Tyr-|-Leu- and -Tyr-|-Trp bonds also occurs).</text>
        <dbReference type="EC" id="3.4.21.92"/>
    </reaction>
</comment>
<comment type="subunit">
    <text>Component of the chloroplastic Clp protease core complex.</text>
</comment>
<comment type="subcellular location">
    <subcellularLocation>
        <location evidence="1">Plastid</location>
        <location evidence="1">Chloroplast stroma</location>
    </subcellularLocation>
</comment>
<comment type="similarity">
    <text evidence="1">Belongs to the peptidase S14 family.</text>
</comment>
<proteinExistence type="inferred from homology"/>
<sequence length="199" mass="22337">MPIGVPKVPFRLPGEEDAVWIDVYNNRLYRERLLFLGQHVDDEIANQLIGIMMYLNGEDENKDMYLYINSPGGAVLAGISVYDAMQFVVPDVHTICMGLAASMGSFILAGGEITKRIALPHARVMIHQPASSYYDGQAGECIMEAEEVLKLRDYITRVYVQRIGKPLWVISEDMERDVFMSAQEAKTYGIVDLVAIENT</sequence>
<organism>
    <name type="scientific">Physcomitrium patens</name>
    <name type="common">Spreading-leaved earth moss</name>
    <name type="synonym">Physcomitrella patens</name>
    <dbReference type="NCBI Taxonomy" id="3218"/>
    <lineage>
        <taxon>Eukaryota</taxon>
        <taxon>Viridiplantae</taxon>
        <taxon>Streptophyta</taxon>
        <taxon>Embryophyta</taxon>
        <taxon>Bryophyta</taxon>
        <taxon>Bryophytina</taxon>
        <taxon>Bryopsida</taxon>
        <taxon>Funariidae</taxon>
        <taxon>Funariales</taxon>
        <taxon>Funariaceae</taxon>
        <taxon>Physcomitrium</taxon>
    </lineage>
</organism>
<protein>
    <recommendedName>
        <fullName evidence="1">ATP-dependent Clp protease proteolytic subunit</fullName>
        <ecNumber evidence="1">3.4.21.92</ecNumber>
    </recommendedName>
    <alternativeName>
        <fullName evidence="1">Endopeptidase Clp</fullName>
    </alternativeName>
</protein>
<keyword id="KW-0150">Chloroplast</keyword>
<keyword id="KW-0378">Hydrolase</keyword>
<keyword id="KW-0934">Plastid</keyword>
<keyword id="KW-0645">Protease</keyword>
<keyword id="KW-1185">Reference proteome</keyword>
<keyword id="KW-0720">Serine protease</keyword>